<protein>
    <recommendedName>
        <fullName>Transcription repressor OFP6</fullName>
    </recommendedName>
    <alternativeName>
        <fullName>Ovate family protein 6</fullName>
        <shortName>AtOFP6</shortName>
    </alternativeName>
</protein>
<keyword id="KW-0539">Nucleus</keyword>
<keyword id="KW-1185">Reference proteome</keyword>
<keyword id="KW-0678">Repressor</keyword>
<keyword id="KW-0804">Transcription</keyword>
<keyword id="KW-0805">Transcription regulation</keyword>
<name>OFP6_ARATH</name>
<dbReference type="EMBL" id="AL050300">
    <property type="status" value="NOT_ANNOTATED_CDS"/>
    <property type="molecule type" value="Genomic_DNA"/>
</dbReference>
<dbReference type="EMBL" id="CP002686">
    <property type="protein sequence ID" value="AEE78955.1"/>
    <property type="molecule type" value="Genomic_DNA"/>
</dbReference>
<dbReference type="RefSeq" id="NP_680125.1">
    <property type="nucleotide sequence ID" value="NM_148870.3"/>
</dbReference>
<dbReference type="BioGRID" id="9736">
    <property type="interactions" value="4"/>
</dbReference>
<dbReference type="FunCoup" id="Q3EAL1">
    <property type="interactions" value="32"/>
</dbReference>
<dbReference type="IntAct" id="Q3EAL1">
    <property type="interactions" value="5"/>
</dbReference>
<dbReference type="STRING" id="3702.Q3EAL1"/>
<dbReference type="PaxDb" id="3702-AT3G52525.1"/>
<dbReference type="EnsemblPlants" id="AT3G52525.1">
    <property type="protein sequence ID" value="AT3G52525.1"/>
    <property type="gene ID" value="AT3G52525"/>
</dbReference>
<dbReference type="GeneID" id="824418"/>
<dbReference type="Gramene" id="AT3G52525.1">
    <property type="protein sequence ID" value="AT3G52525.1"/>
    <property type="gene ID" value="AT3G52525"/>
</dbReference>
<dbReference type="KEGG" id="ath:AT3G52525"/>
<dbReference type="Araport" id="AT3G52525"/>
<dbReference type="TAIR" id="AT3G52525">
    <property type="gene designation" value="OFP6"/>
</dbReference>
<dbReference type="eggNOG" id="ENOG502S0X5">
    <property type="taxonomic scope" value="Eukaryota"/>
</dbReference>
<dbReference type="HOGENOM" id="CLU_061898_2_1_1"/>
<dbReference type="InParanoid" id="Q3EAL1"/>
<dbReference type="OMA" id="YRHCHSS"/>
<dbReference type="PhylomeDB" id="Q3EAL1"/>
<dbReference type="PRO" id="PR:Q3EAL1"/>
<dbReference type="Proteomes" id="UP000006548">
    <property type="component" value="Chromosome 3"/>
</dbReference>
<dbReference type="ExpressionAtlas" id="Q3EAL1">
    <property type="expression patterns" value="baseline and differential"/>
</dbReference>
<dbReference type="GO" id="GO:0005634">
    <property type="term" value="C:nucleus"/>
    <property type="evidence" value="ECO:0007669"/>
    <property type="project" value="UniProtKB-SubCell"/>
</dbReference>
<dbReference type="GO" id="GO:0045892">
    <property type="term" value="P:negative regulation of DNA-templated transcription"/>
    <property type="evidence" value="ECO:0000314"/>
    <property type="project" value="TAIR"/>
</dbReference>
<dbReference type="InterPro" id="IPR038933">
    <property type="entry name" value="Ovate"/>
</dbReference>
<dbReference type="InterPro" id="IPR006458">
    <property type="entry name" value="Ovate_C"/>
</dbReference>
<dbReference type="NCBIfam" id="TIGR01568">
    <property type="entry name" value="A_thal_3678"/>
    <property type="match status" value="1"/>
</dbReference>
<dbReference type="PANTHER" id="PTHR33057">
    <property type="entry name" value="TRANSCRIPTION REPRESSOR OFP7-RELATED"/>
    <property type="match status" value="1"/>
</dbReference>
<dbReference type="PANTHER" id="PTHR33057:SF70">
    <property type="entry name" value="TRANSCRIPTION REPRESSOR-RELATED"/>
    <property type="match status" value="1"/>
</dbReference>
<dbReference type="Pfam" id="PF04844">
    <property type="entry name" value="Ovate"/>
    <property type="match status" value="1"/>
</dbReference>
<dbReference type="PROSITE" id="PS51754">
    <property type="entry name" value="OVATE"/>
    <property type="match status" value="1"/>
</dbReference>
<sequence length="159" mass="17908">MATKSKKKILKTVSVVDISCGNCIKPTFASIFNFFSKKPKRPSSTYRHCHSSISSATPSSTPLATASVAVEKDSDDPYLDFRQSMLQMILENQIYSKDELRELLQCFLSLNSHYHHGIIVRAFSEIWEDVSSAAASAVEASPLITRHVSRASRDYYNYY</sequence>
<organism>
    <name type="scientific">Arabidopsis thaliana</name>
    <name type="common">Mouse-ear cress</name>
    <dbReference type="NCBI Taxonomy" id="3702"/>
    <lineage>
        <taxon>Eukaryota</taxon>
        <taxon>Viridiplantae</taxon>
        <taxon>Streptophyta</taxon>
        <taxon>Embryophyta</taxon>
        <taxon>Tracheophyta</taxon>
        <taxon>Spermatophyta</taxon>
        <taxon>Magnoliopsida</taxon>
        <taxon>eudicotyledons</taxon>
        <taxon>Gunneridae</taxon>
        <taxon>Pentapetalae</taxon>
        <taxon>rosids</taxon>
        <taxon>malvids</taxon>
        <taxon>Brassicales</taxon>
        <taxon>Brassicaceae</taxon>
        <taxon>Camelineae</taxon>
        <taxon>Arabidopsis</taxon>
    </lineage>
</organism>
<comment type="function">
    <text evidence="5">Transcriptional repressor that regulates multiple aspects of plant growth and development through the regulation of BEL1-LIKE (BLH) and KNOX TALE (KNAT) homeodomain transcription factors.</text>
</comment>
<comment type="subunit">
    <text evidence="4">Interacts with KNAT1 and KNAT7.</text>
</comment>
<comment type="subcellular location">
    <subcellularLocation>
        <location evidence="1">Nucleus</location>
    </subcellularLocation>
</comment>
<comment type="tissue specificity">
    <text evidence="5">Expressed in roots, shoots, rosette and cauline leaves, stems, flower buds and siliques.</text>
</comment>
<comment type="miscellaneous">
    <text evidence="6">Plants over-expressing OFP6 show flat, thick and cyan leaves, and enhanced apical dormancy.</text>
</comment>
<feature type="chain" id="PRO_0000429675" description="Transcription repressor OFP6">
    <location>
        <begin position="1"/>
        <end position="159"/>
    </location>
</feature>
<feature type="domain" description="OVATE" evidence="2">
    <location>
        <begin position="70"/>
        <end position="129"/>
    </location>
</feature>
<feature type="region of interest" description="Disordered" evidence="3">
    <location>
        <begin position="39"/>
        <end position="60"/>
    </location>
</feature>
<feature type="compositionally biased region" description="Low complexity" evidence="3">
    <location>
        <begin position="51"/>
        <end position="60"/>
    </location>
</feature>
<gene>
    <name type="primary">OFP6</name>
    <name type="ordered locus">At3g52525</name>
    <name type="ORF">F22O6</name>
</gene>
<accession>Q3EAL1</accession>
<proteinExistence type="evidence at protein level"/>
<reference key="1">
    <citation type="journal article" date="2000" name="Nature">
        <title>Sequence and analysis of chromosome 3 of the plant Arabidopsis thaliana.</title>
        <authorList>
            <person name="Salanoubat M."/>
            <person name="Lemcke K."/>
            <person name="Rieger M."/>
            <person name="Ansorge W."/>
            <person name="Unseld M."/>
            <person name="Fartmann B."/>
            <person name="Valle G."/>
            <person name="Bloecker H."/>
            <person name="Perez-Alonso M."/>
            <person name="Obermaier B."/>
            <person name="Delseny M."/>
            <person name="Boutry M."/>
            <person name="Grivell L.A."/>
            <person name="Mache R."/>
            <person name="Puigdomenech P."/>
            <person name="De Simone V."/>
            <person name="Choisne N."/>
            <person name="Artiguenave F."/>
            <person name="Robert C."/>
            <person name="Brottier P."/>
            <person name="Wincker P."/>
            <person name="Cattolico L."/>
            <person name="Weissenbach J."/>
            <person name="Saurin W."/>
            <person name="Quetier F."/>
            <person name="Schaefer M."/>
            <person name="Mueller-Auer S."/>
            <person name="Gabel C."/>
            <person name="Fuchs M."/>
            <person name="Benes V."/>
            <person name="Wurmbach E."/>
            <person name="Drzonek H."/>
            <person name="Erfle H."/>
            <person name="Jordan N."/>
            <person name="Bangert S."/>
            <person name="Wiedelmann R."/>
            <person name="Kranz H."/>
            <person name="Voss H."/>
            <person name="Holland R."/>
            <person name="Brandt P."/>
            <person name="Nyakatura G."/>
            <person name="Vezzi A."/>
            <person name="D'Angelo M."/>
            <person name="Pallavicini A."/>
            <person name="Toppo S."/>
            <person name="Simionati B."/>
            <person name="Conrad A."/>
            <person name="Hornischer K."/>
            <person name="Kauer G."/>
            <person name="Loehnert T.-H."/>
            <person name="Nordsiek G."/>
            <person name="Reichelt J."/>
            <person name="Scharfe M."/>
            <person name="Schoen O."/>
            <person name="Bargues M."/>
            <person name="Terol J."/>
            <person name="Climent J."/>
            <person name="Navarro P."/>
            <person name="Collado C."/>
            <person name="Perez-Perez A."/>
            <person name="Ottenwaelder B."/>
            <person name="Duchemin D."/>
            <person name="Cooke R."/>
            <person name="Laudie M."/>
            <person name="Berger-Llauro C."/>
            <person name="Purnelle B."/>
            <person name="Masuy D."/>
            <person name="de Haan M."/>
            <person name="Maarse A.C."/>
            <person name="Alcaraz J.-P."/>
            <person name="Cottet A."/>
            <person name="Casacuberta E."/>
            <person name="Monfort A."/>
            <person name="Argiriou A."/>
            <person name="Flores M."/>
            <person name="Liguori R."/>
            <person name="Vitale D."/>
            <person name="Mannhaupt G."/>
            <person name="Haase D."/>
            <person name="Schoof H."/>
            <person name="Rudd S."/>
            <person name="Zaccaria P."/>
            <person name="Mewes H.-W."/>
            <person name="Mayer K.F.X."/>
            <person name="Kaul S."/>
            <person name="Town C.D."/>
            <person name="Koo H.L."/>
            <person name="Tallon L.J."/>
            <person name="Jenkins J."/>
            <person name="Rooney T."/>
            <person name="Rizzo M."/>
            <person name="Walts A."/>
            <person name="Utterback T."/>
            <person name="Fujii C.Y."/>
            <person name="Shea T.P."/>
            <person name="Creasy T.H."/>
            <person name="Haas B."/>
            <person name="Maiti R."/>
            <person name="Wu D."/>
            <person name="Peterson J."/>
            <person name="Van Aken S."/>
            <person name="Pai G."/>
            <person name="Militscher J."/>
            <person name="Sellers P."/>
            <person name="Gill J.E."/>
            <person name="Feldblyum T.V."/>
            <person name="Preuss D."/>
            <person name="Lin X."/>
            <person name="Nierman W.C."/>
            <person name="Salzberg S.L."/>
            <person name="White O."/>
            <person name="Venter J.C."/>
            <person name="Fraser C.M."/>
            <person name="Kaneko T."/>
            <person name="Nakamura Y."/>
            <person name="Sato S."/>
            <person name="Kato T."/>
            <person name="Asamizu E."/>
            <person name="Sasamoto S."/>
            <person name="Kimura T."/>
            <person name="Idesawa K."/>
            <person name="Kawashima K."/>
            <person name="Kishida Y."/>
            <person name="Kiyokawa C."/>
            <person name="Kohara M."/>
            <person name="Matsumoto M."/>
            <person name="Matsuno A."/>
            <person name="Muraki A."/>
            <person name="Nakayama S."/>
            <person name="Nakazaki N."/>
            <person name="Shinpo S."/>
            <person name="Takeuchi C."/>
            <person name="Wada T."/>
            <person name="Watanabe A."/>
            <person name="Yamada M."/>
            <person name="Yasuda M."/>
            <person name="Tabata S."/>
        </authorList>
    </citation>
    <scope>NUCLEOTIDE SEQUENCE [LARGE SCALE GENOMIC DNA]</scope>
    <source>
        <strain>cv. Columbia</strain>
    </source>
</reference>
<reference key="2">
    <citation type="journal article" date="2017" name="Plant J.">
        <title>Araport11: a complete reannotation of the Arabidopsis thaliana reference genome.</title>
        <authorList>
            <person name="Cheng C.Y."/>
            <person name="Krishnakumar V."/>
            <person name="Chan A.P."/>
            <person name="Thibaud-Nissen F."/>
            <person name="Schobel S."/>
            <person name="Town C.D."/>
        </authorList>
    </citation>
    <scope>GENOME REANNOTATION</scope>
    <source>
        <strain>cv. Columbia</strain>
    </source>
</reference>
<reference key="3">
    <citation type="journal article" date="2005" name="Proc. Natl. Acad. Sci. U.S.A.">
        <title>A central role of Arabidopsis thaliana ovate family proteins in networking and subcellular localization of 3-aa loop extension homeodomain proteins.</title>
        <authorList>
            <person name="Hackbusch J."/>
            <person name="Richter K."/>
            <person name="Muller J."/>
            <person name="Salamini F."/>
            <person name="Uhrig J.F."/>
        </authorList>
    </citation>
    <scope>INTERACTION WITH KNAT1 AND KNAT7</scope>
</reference>
<reference key="4">
    <citation type="journal article" date="2011" name="PLoS ONE">
        <title>Arabidopsis ovate family proteins, a novel transcriptional repressor family, control multiple aspects of plant growth and development.</title>
        <authorList>
            <person name="Wang S."/>
            <person name="Chang Y."/>
            <person name="Guo J."/>
            <person name="Zeng Q."/>
            <person name="Ellis B.E."/>
            <person name="Chen J.G."/>
        </authorList>
    </citation>
    <scope>FUNCTION</scope>
    <scope>TISSUE SPECIFICITY</scope>
    <scope>GENE FAMILY</scope>
</reference>
<evidence type="ECO:0000250" key="1"/>
<evidence type="ECO:0000255" key="2">
    <source>
        <dbReference type="PROSITE-ProRule" id="PRU01090"/>
    </source>
</evidence>
<evidence type="ECO:0000256" key="3">
    <source>
        <dbReference type="SAM" id="MobiDB-lite"/>
    </source>
</evidence>
<evidence type="ECO:0000269" key="4">
    <source>
    </source>
</evidence>
<evidence type="ECO:0000269" key="5">
    <source>
    </source>
</evidence>
<evidence type="ECO:0000305" key="6">
    <source>
    </source>
</evidence>